<dbReference type="EC" id="1.2.1.12" evidence="2"/>
<dbReference type="EMBL" id="M95569">
    <property type="protein sequence ID" value="AAA26953.1"/>
    <property type="molecule type" value="Genomic_DNA"/>
</dbReference>
<dbReference type="RefSeq" id="WP_014635277.1">
    <property type="nucleotide sequence ID" value="NZ_WVFT01000010.1"/>
</dbReference>
<dbReference type="PDB" id="6ITE">
    <property type="method" value="X-ray"/>
    <property type="resolution" value="1.74 A"/>
    <property type="chains" value="O/P/Q/R=1-336"/>
</dbReference>
<dbReference type="PDBsum" id="6ITE"/>
<dbReference type="SMR" id="P0C0G6"/>
<dbReference type="STRING" id="1314.SD89_01335"/>
<dbReference type="GeneID" id="69900200"/>
<dbReference type="eggNOG" id="COG0057">
    <property type="taxonomic scope" value="Bacteria"/>
</dbReference>
<dbReference type="BRENDA" id="1.2.1.12">
    <property type="organism ID" value="5935"/>
</dbReference>
<dbReference type="UniPathway" id="UPA00109">
    <property type="reaction ID" value="UER00184"/>
</dbReference>
<dbReference type="GO" id="GO:0005737">
    <property type="term" value="C:cytoplasm"/>
    <property type="evidence" value="ECO:0000314"/>
    <property type="project" value="CAFA"/>
</dbReference>
<dbReference type="GO" id="GO:0004365">
    <property type="term" value="F:glyceraldehyde-3-phosphate dehydrogenase (NAD+) (phosphorylating) activity"/>
    <property type="evidence" value="ECO:0000314"/>
    <property type="project" value="CAFA"/>
</dbReference>
<dbReference type="GO" id="GO:0051287">
    <property type="term" value="F:NAD binding"/>
    <property type="evidence" value="ECO:0000314"/>
    <property type="project" value="CAFA"/>
</dbReference>
<dbReference type="GO" id="GO:0050661">
    <property type="term" value="F:NADP binding"/>
    <property type="evidence" value="ECO:0007669"/>
    <property type="project" value="InterPro"/>
</dbReference>
<dbReference type="GO" id="GO:0002020">
    <property type="term" value="F:protease binding"/>
    <property type="evidence" value="ECO:0000314"/>
    <property type="project" value="CAFA"/>
</dbReference>
<dbReference type="GO" id="GO:0006006">
    <property type="term" value="P:glucose metabolic process"/>
    <property type="evidence" value="ECO:0007669"/>
    <property type="project" value="InterPro"/>
</dbReference>
<dbReference type="GO" id="GO:0006096">
    <property type="term" value="P:glycolytic process"/>
    <property type="evidence" value="ECO:0007669"/>
    <property type="project" value="UniProtKB-UniPathway"/>
</dbReference>
<dbReference type="CDD" id="cd18126">
    <property type="entry name" value="GAPDH_I_C"/>
    <property type="match status" value="1"/>
</dbReference>
<dbReference type="CDD" id="cd05214">
    <property type="entry name" value="GAPDH_I_N"/>
    <property type="match status" value="1"/>
</dbReference>
<dbReference type="FunFam" id="3.30.360.10:FF:000002">
    <property type="entry name" value="Glyceraldehyde-3-phosphate dehydrogenase"/>
    <property type="match status" value="1"/>
</dbReference>
<dbReference type="FunFam" id="3.40.50.720:FF:000001">
    <property type="entry name" value="Glyceraldehyde-3-phosphate dehydrogenase"/>
    <property type="match status" value="1"/>
</dbReference>
<dbReference type="Gene3D" id="3.30.360.10">
    <property type="entry name" value="Dihydrodipicolinate Reductase, domain 2"/>
    <property type="match status" value="1"/>
</dbReference>
<dbReference type="Gene3D" id="3.40.50.720">
    <property type="entry name" value="NAD(P)-binding Rossmann-like Domain"/>
    <property type="match status" value="1"/>
</dbReference>
<dbReference type="InterPro" id="IPR020831">
    <property type="entry name" value="GlycerAld/Erythrose_P_DH"/>
</dbReference>
<dbReference type="InterPro" id="IPR020830">
    <property type="entry name" value="GlycerAld_3-P_DH_AS"/>
</dbReference>
<dbReference type="InterPro" id="IPR020829">
    <property type="entry name" value="GlycerAld_3-P_DH_cat"/>
</dbReference>
<dbReference type="InterPro" id="IPR020828">
    <property type="entry name" value="GlycerAld_3-P_DH_NAD(P)-bd"/>
</dbReference>
<dbReference type="InterPro" id="IPR006424">
    <property type="entry name" value="Glyceraldehyde-3-P_DH_1"/>
</dbReference>
<dbReference type="InterPro" id="IPR036291">
    <property type="entry name" value="NAD(P)-bd_dom_sf"/>
</dbReference>
<dbReference type="NCBIfam" id="TIGR01534">
    <property type="entry name" value="GAPDH-I"/>
    <property type="match status" value="1"/>
</dbReference>
<dbReference type="PANTHER" id="PTHR43148">
    <property type="entry name" value="GLYCERALDEHYDE-3-PHOSPHATE DEHYDROGENASE 2"/>
    <property type="match status" value="1"/>
</dbReference>
<dbReference type="Pfam" id="PF02800">
    <property type="entry name" value="Gp_dh_C"/>
    <property type="match status" value="1"/>
</dbReference>
<dbReference type="Pfam" id="PF00044">
    <property type="entry name" value="Gp_dh_N"/>
    <property type="match status" value="1"/>
</dbReference>
<dbReference type="PIRSF" id="PIRSF000149">
    <property type="entry name" value="GAP_DH"/>
    <property type="match status" value="1"/>
</dbReference>
<dbReference type="PRINTS" id="PR00078">
    <property type="entry name" value="G3PDHDRGNASE"/>
</dbReference>
<dbReference type="SMART" id="SM00846">
    <property type="entry name" value="Gp_dh_N"/>
    <property type="match status" value="1"/>
</dbReference>
<dbReference type="SUPFAM" id="SSF55347">
    <property type="entry name" value="Glyceraldehyde-3-phosphate dehydrogenase-like, C-terminal domain"/>
    <property type="match status" value="1"/>
</dbReference>
<dbReference type="SUPFAM" id="SSF51735">
    <property type="entry name" value="NAD(P)-binding Rossmann-fold domains"/>
    <property type="match status" value="1"/>
</dbReference>
<dbReference type="PROSITE" id="PS00071">
    <property type="entry name" value="GAPDH"/>
    <property type="match status" value="1"/>
</dbReference>
<sequence length="336" mass="35959">MVVKVGINGFGRIGRLAFRRIQNIEGVEVTRINDLTDPNMLAHLLKYDTTQGRFDGTVEVKEGGFEVNGNFIKVSAERDPENIDWATDGVEIVLEATGFFAKKEAAEKHLHANGAKKVVITAPGGNDVKTVVFNTNHDILDGTETVISGASCTTNCLAPMAKALHDAFGIQKGLMTTIHAYTGDQMILDGPHRGGDLRRARAGAANIVPNSTGAAKAIGLVIPELNGKLDGAAQRVPVPTGSVTELVVTLDKNVSVDEINSAMKAASNDSFGYTEDPIVSSDIVGVSYGSLFDATQTKVMEVDGSQLVKVVSWYDNEMSYTAQLVRTLEYFAKIAK</sequence>
<evidence type="ECO:0000250" key="1">
    <source>
        <dbReference type="UniProtKB" id="P00362"/>
    </source>
</evidence>
<evidence type="ECO:0000250" key="2">
    <source>
        <dbReference type="UniProtKB" id="P09124"/>
    </source>
</evidence>
<evidence type="ECO:0000250" key="3">
    <source>
        <dbReference type="UniProtKB" id="Q6GIL8"/>
    </source>
</evidence>
<evidence type="ECO:0000269" key="4">
    <source>
    </source>
</evidence>
<evidence type="ECO:0000303" key="5">
    <source>
    </source>
</evidence>
<evidence type="ECO:0000305" key="6"/>
<evidence type="ECO:0007829" key="7">
    <source>
        <dbReference type="PDB" id="6ITE"/>
    </source>
</evidence>
<accession>P0C0G6</accession>
<accession>P50467</accession>
<accession>P68776</accession>
<protein>
    <recommendedName>
        <fullName evidence="1">Glyceraldehyde-3-phosphate dehydrogenase</fullName>
        <shortName evidence="1">GAPDH</shortName>
        <ecNumber evidence="2">1.2.1.12</ecNumber>
    </recommendedName>
    <alternativeName>
        <fullName evidence="1">NAD-dependent glyceraldehyde-3-phosphate dehydrogenase</fullName>
    </alternativeName>
    <alternativeName>
        <fullName evidence="5">Plasmin receptor</fullName>
    </alternativeName>
    <alternativeName>
        <fullName evidence="5">Plasminogen-binding protein</fullName>
    </alternativeName>
</protein>
<name>G3P_STRPY</name>
<comment type="function">
    <text>Also binds human plasminogen.</text>
</comment>
<comment type="function">
    <text evidence="1">Catalyzes the oxidative phosphorylation of glyceraldehyde 3-phosphate (G3P) to 1,3-bisphosphoglycerate (BPG) using the cofactor NAD. The first reaction step involves the formation of a hemiacetal intermediate between G3P and a cysteine residue, and this hemiacetal intermediate is then oxidized to a thioester, with concomitant reduction of NAD to NADH. The reduced NADH is then exchanged with the second NAD, and the thioester is attacked by a nucleophilic inorganic phosphate to produce BPG.</text>
</comment>
<comment type="catalytic activity">
    <reaction evidence="2">
        <text>D-glyceraldehyde 3-phosphate + phosphate + NAD(+) = (2R)-3-phospho-glyceroyl phosphate + NADH + H(+)</text>
        <dbReference type="Rhea" id="RHEA:10300"/>
        <dbReference type="ChEBI" id="CHEBI:15378"/>
        <dbReference type="ChEBI" id="CHEBI:43474"/>
        <dbReference type="ChEBI" id="CHEBI:57540"/>
        <dbReference type="ChEBI" id="CHEBI:57604"/>
        <dbReference type="ChEBI" id="CHEBI:57945"/>
        <dbReference type="ChEBI" id="CHEBI:59776"/>
        <dbReference type="EC" id="1.2.1.12"/>
    </reaction>
</comment>
<comment type="pathway">
    <text evidence="6">Carbohydrate degradation; glycolysis; pyruvate from D-glyceraldehyde 3-phosphate: step 1/5.</text>
</comment>
<comment type="subunit">
    <text evidence="1">Homotetramer.</text>
</comment>
<comment type="subcellular location">
    <subcellularLocation>
        <location evidence="6">Cytoplasm</location>
    </subcellularLocation>
</comment>
<comment type="miscellaneous">
    <text evidence="4">Binds human plasminogen.</text>
</comment>
<comment type="similarity">
    <text evidence="6">Belongs to the glyceraldehyde-3-phosphate dehydrogenase family.</text>
</comment>
<keyword id="KW-0002">3D-structure</keyword>
<keyword id="KW-0963">Cytoplasm</keyword>
<keyword id="KW-0903">Direct protein sequencing</keyword>
<keyword id="KW-0324">Glycolysis</keyword>
<keyword id="KW-0520">NAD</keyword>
<keyword id="KW-0547">Nucleotide-binding</keyword>
<keyword id="KW-0560">Oxidoreductase</keyword>
<reference key="1">
    <citation type="journal article" date="1992" name="J. Bacteriol.">
        <title>Cloning, sequence analysis, and expression in Escherichia coli of a streptococcal plasmin receptor.</title>
        <authorList>
            <person name="Lottenberg R."/>
            <person name="Broder C.C."/>
            <person name="Boyle M.D."/>
            <person name="Kain S.J."/>
            <person name="Schroeder B.L."/>
            <person name="Curtiss R. III"/>
        </authorList>
    </citation>
    <scope>NUCLEOTIDE SEQUENCE [GENOMIC DNA]</scope>
    <scope>PROTEIN SEQUENCE OF 2-74; 161-174 AND 187-217</scope>
    <source>
        <strain>64/14</strain>
    </source>
</reference>
<proteinExistence type="evidence at protein level"/>
<feature type="initiator methionine" description="Removed" evidence="4">
    <location>
        <position position="1"/>
    </location>
</feature>
<feature type="chain" id="PRO_0000145703" description="Glyceraldehyde-3-phosphate dehydrogenase">
    <location>
        <begin position="2"/>
        <end position="336"/>
    </location>
</feature>
<feature type="active site" description="Nucleophile" evidence="1">
    <location>
        <position position="152"/>
    </location>
</feature>
<feature type="binding site" evidence="1">
    <location>
        <begin position="12"/>
        <end position="13"/>
    </location>
    <ligand>
        <name>NAD(+)</name>
        <dbReference type="ChEBI" id="CHEBI:57540"/>
    </ligand>
</feature>
<feature type="binding site" evidence="1">
    <location>
        <position position="34"/>
    </location>
    <ligand>
        <name>NAD(+)</name>
        <dbReference type="ChEBI" id="CHEBI:57540"/>
    </ligand>
</feature>
<feature type="binding site" evidence="1">
    <location>
        <position position="78"/>
    </location>
    <ligand>
        <name>NAD(+)</name>
        <dbReference type="ChEBI" id="CHEBI:57540"/>
    </ligand>
</feature>
<feature type="binding site" evidence="1">
    <location>
        <position position="121"/>
    </location>
    <ligand>
        <name>NAD(+)</name>
        <dbReference type="ChEBI" id="CHEBI:57540"/>
    </ligand>
</feature>
<feature type="binding site" evidence="1">
    <location>
        <begin position="151"/>
        <end position="153"/>
    </location>
    <ligand>
        <name>D-glyceraldehyde 3-phosphate</name>
        <dbReference type="ChEBI" id="CHEBI:59776"/>
    </ligand>
</feature>
<feature type="binding site" evidence="1">
    <location>
        <position position="182"/>
    </location>
    <ligand>
        <name>D-glyceraldehyde 3-phosphate</name>
        <dbReference type="ChEBI" id="CHEBI:59776"/>
    </ligand>
</feature>
<feature type="binding site" evidence="1">
    <location>
        <position position="199"/>
    </location>
    <ligand>
        <name>D-glyceraldehyde 3-phosphate</name>
        <dbReference type="ChEBI" id="CHEBI:59776"/>
    </ligand>
</feature>
<feature type="binding site" evidence="1">
    <location>
        <begin position="212"/>
        <end position="213"/>
    </location>
    <ligand>
        <name>D-glyceraldehyde 3-phosphate</name>
        <dbReference type="ChEBI" id="CHEBI:59776"/>
    </ligand>
</feature>
<feature type="binding site" evidence="1">
    <location>
        <position position="235"/>
    </location>
    <ligand>
        <name>D-glyceraldehyde 3-phosphate</name>
        <dbReference type="ChEBI" id="CHEBI:59776"/>
    </ligand>
</feature>
<feature type="binding site" evidence="1">
    <location>
        <position position="316"/>
    </location>
    <ligand>
        <name>NAD(+)</name>
        <dbReference type="ChEBI" id="CHEBI:57540"/>
    </ligand>
</feature>
<feature type="site" description="Activates thiol group during catalysis" evidence="3">
    <location>
        <position position="179"/>
    </location>
</feature>
<feature type="strand" evidence="7">
    <location>
        <begin position="3"/>
        <end position="8"/>
    </location>
</feature>
<feature type="helix" evidence="7">
    <location>
        <begin position="12"/>
        <end position="21"/>
    </location>
</feature>
<feature type="strand" evidence="7">
    <location>
        <begin position="25"/>
        <end position="33"/>
    </location>
</feature>
<feature type="helix" evidence="7">
    <location>
        <begin position="38"/>
        <end position="46"/>
    </location>
</feature>
<feature type="turn" evidence="7">
    <location>
        <begin position="49"/>
        <end position="51"/>
    </location>
</feature>
<feature type="strand" evidence="7">
    <location>
        <begin position="58"/>
        <end position="61"/>
    </location>
</feature>
<feature type="strand" evidence="7">
    <location>
        <begin position="64"/>
        <end position="67"/>
    </location>
</feature>
<feature type="strand" evidence="7">
    <location>
        <begin position="70"/>
        <end position="75"/>
    </location>
</feature>
<feature type="helix" evidence="7">
    <location>
        <begin position="80"/>
        <end position="82"/>
    </location>
</feature>
<feature type="helix" evidence="7">
    <location>
        <begin position="85"/>
        <end position="88"/>
    </location>
</feature>
<feature type="strand" evidence="7">
    <location>
        <begin position="92"/>
        <end position="95"/>
    </location>
</feature>
<feature type="strand" evidence="7">
    <location>
        <begin position="97"/>
        <end position="99"/>
    </location>
</feature>
<feature type="helix" evidence="7">
    <location>
        <begin position="103"/>
        <end position="106"/>
    </location>
</feature>
<feature type="helix" evidence="7">
    <location>
        <begin position="107"/>
        <end position="110"/>
    </location>
</feature>
<feature type="strand" evidence="7">
    <location>
        <begin position="116"/>
        <end position="122"/>
    </location>
</feature>
<feature type="strand" evidence="7">
    <location>
        <begin position="128"/>
        <end position="130"/>
    </location>
</feature>
<feature type="turn" evidence="7">
    <location>
        <begin position="133"/>
        <end position="135"/>
    </location>
</feature>
<feature type="helix" evidence="7">
    <location>
        <begin position="137"/>
        <end position="139"/>
    </location>
</feature>
<feature type="strand" evidence="7">
    <location>
        <begin position="145"/>
        <end position="148"/>
    </location>
</feature>
<feature type="helix" evidence="7">
    <location>
        <begin position="152"/>
        <end position="168"/>
    </location>
</feature>
<feature type="strand" evidence="7">
    <location>
        <begin position="170"/>
        <end position="180"/>
    </location>
</feature>
<feature type="strand" evidence="7">
    <location>
        <begin position="187"/>
        <end position="189"/>
    </location>
</feature>
<feature type="turn" evidence="7">
    <location>
        <begin position="197"/>
        <end position="200"/>
    </location>
</feature>
<feature type="strand" evidence="7">
    <location>
        <begin position="208"/>
        <end position="211"/>
    </location>
</feature>
<feature type="turn" evidence="7">
    <location>
        <begin position="214"/>
        <end position="217"/>
    </location>
</feature>
<feature type="helix" evidence="7">
    <location>
        <begin position="218"/>
        <end position="220"/>
    </location>
</feature>
<feature type="helix" evidence="7">
    <location>
        <begin position="223"/>
        <end position="225"/>
    </location>
</feature>
<feature type="turn" evidence="7">
    <location>
        <begin position="226"/>
        <end position="228"/>
    </location>
</feature>
<feature type="strand" evidence="7">
    <location>
        <begin position="229"/>
        <end position="237"/>
    </location>
</feature>
<feature type="strand" evidence="7">
    <location>
        <begin position="242"/>
        <end position="252"/>
    </location>
</feature>
<feature type="helix" evidence="7">
    <location>
        <begin position="256"/>
        <end position="265"/>
    </location>
</feature>
<feature type="strand" evidence="7">
    <location>
        <begin position="269"/>
        <end position="274"/>
    </location>
</feature>
<feature type="helix" evidence="7">
    <location>
        <begin position="280"/>
        <end position="283"/>
    </location>
</feature>
<feature type="strand" evidence="7">
    <location>
        <begin position="289"/>
        <end position="293"/>
    </location>
</feature>
<feature type="helix" evidence="7">
    <location>
        <begin position="294"/>
        <end position="296"/>
    </location>
</feature>
<feature type="strand" evidence="7">
    <location>
        <begin position="298"/>
        <end position="302"/>
    </location>
</feature>
<feature type="strand" evidence="7">
    <location>
        <begin position="305"/>
        <end position="314"/>
    </location>
</feature>
<feature type="helix" evidence="7">
    <location>
        <begin position="318"/>
        <end position="334"/>
    </location>
</feature>
<gene>
    <name type="primary">gap</name>
    <name type="synonym">gapA</name>
    <name type="synonym">plr</name>
</gene>
<organism>
    <name type="scientific">Streptococcus pyogenes</name>
    <dbReference type="NCBI Taxonomy" id="1314"/>
    <lineage>
        <taxon>Bacteria</taxon>
        <taxon>Bacillati</taxon>
        <taxon>Bacillota</taxon>
        <taxon>Bacilli</taxon>
        <taxon>Lactobacillales</taxon>
        <taxon>Streptococcaceae</taxon>
        <taxon>Streptococcus</taxon>
    </lineage>
</organism>